<feature type="initiator methionine" description="Removed" evidence="2">
    <location>
        <position position="1"/>
    </location>
</feature>
<feature type="chain" id="PRO_0000417371" description="Glutathione amide reductase" evidence="2">
    <location>
        <begin position="2"/>
        <end position="463"/>
    </location>
</feature>
<feature type="active site" description="Proton acceptor" evidence="3">
    <location>
        <position position="437"/>
    </location>
</feature>
<feature type="binding site" evidence="3">
    <location>
        <position position="2"/>
    </location>
    <ligand>
        <name>Ni(2+)</name>
        <dbReference type="ChEBI" id="CHEBI:49786"/>
    </ligand>
</feature>
<feature type="binding site" evidence="3">
    <location>
        <position position="3"/>
    </location>
    <ligand>
        <name>Ni(2+)</name>
        <dbReference type="ChEBI" id="CHEBI:49786"/>
    </ligand>
</feature>
<feature type="binding site" evidence="3">
    <location>
        <position position="4"/>
    </location>
    <ligand>
        <name>Ni(2+)</name>
        <dbReference type="ChEBI" id="CHEBI:49786"/>
    </ligand>
</feature>
<feature type="binding site" evidence="3">
    <location>
        <begin position="14"/>
        <end position="15"/>
    </location>
    <ligand>
        <name>FAD</name>
        <dbReference type="ChEBI" id="CHEBI:57692"/>
    </ligand>
</feature>
<feature type="binding site" evidence="3">
    <location>
        <position position="34"/>
    </location>
    <ligand>
        <name>FAD</name>
        <dbReference type="ChEBI" id="CHEBI:57692"/>
    </ligand>
</feature>
<feature type="binding site" evidence="3">
    <location>
        <position position="41"/>
    </location>
    <ligand>
        <name>FAD</name>
        <dbReference type="ChEBI" id="CHEBI:57692"/>
    </ligand>
</feature>
<feature type="binding site" evidence="3">
    <location>
        <position position="50"/>
    </location>
    <ligand>
        <name>FAD</name>
        <dbReference type="ChEBI" id="CHEBI:57692"/>
    </ligand>
</feature>
<feature type="binding site" evidence="3">
    <location>
        <position position="50"/>
    </location>
    <ligand>
        <name>NAD(+)</name>
        <dbReference type="ChEBI" id="CHEBI:57540"/>
    </ligand>
</feature>
<feature type="binding site" evidence="3">
    <location>
        <begin position="113"/>
        <end position="114"/>
    </location>
    <ligand>
        <name>FAD</name>
        <dbReference type="ChEBI" id="CHEBI:57692"/>
    </ligand>
</feature>
<feature type="binding site" evidence="3">
    <location>
        <begin position="174"/>
        <end position="180"/>
    </location>
    <ligand>
        <name>NAD(+)</name>
        <dbReference type="ChEBI" id="CHEBI:57540"/>
    </ligand>
</feature>
<feature type="binding site" evidence="3">
    <location>
        <begin position="197"/>
        <end position="198"/>
    </location>
    <ligand>
        <name>NAD(+)</name>
        <dbReference type="ChEBI" id="CHEBI:57540"/>
    </ligand>
</feature>
<feature type="binding site" evidence="3">
    <location>
        <position position="230"/>
    </location>
    <ligand>
        <name>NAD(+)</name>
        <dbReference type="ChEBI" id="CHEBI:57540"/>
    </ligand>
</feature>
<feature type="binding site" evidence="3">
    <location>
        <position position="261"/>
    </location>
    <ligand>
        <name>NAD(+)</name>
        <dbReference type="ChEBI" id="CHEBI:57540"/>
    </ligand>
</feature>
<feature type="binding site" evidence="3">
    <location>
        <position position="302"/>
    </location>
    <ligand>
        <name>FAD</name>
        <dbReference type="ChEBI" id="CHEBI:57692"/>
    </ligand>
</feature>
<feature type="binding site" evidence="3">
    <location>
        <begin position="308"/>
        <end position="310"/>
    </location>
    <ligand>
        <name>FAD</name>
        <dbReference type="ChEBI" id="CHEBI:57692"/>
    </ligand>
</feature>
<feature type="binding site" evidence="3">
    <location>
        <position position="308"/>
    </location>
    <ligand>
        <name>NAD(+)</name>
        <dbReference type="ChEBI" id="CHEBI:57540"/>
    </ligand>
</feature>
<feature type="binding site" evidence="3">
    <location>
        <position position="341"/>
    </location>
    <ligand>
        <name>NAD(+)</name>
        <dbReference type="ChEBI" id="CHEBI:57540"/>
    </ligand>
</feature>
<feature type="binding site" evidence="3">
    <location>
        <position position="437"/>
    </location>
    <ligand>
        <name>FAD</name>
        <dbReference type="ChEBI" id="CHEBI:57692"/>
    </ligand>
</feature>
<feature type="disulfide bond" description="Redox-active" evidence="3">
    <location>
        <begin position="42"/>
        <end position="47"/>
    </location>
</feature>
<feature type="strand" evidence="7">
    <location>
        <begin position="5"/>
        <end position="10"/>
    </location>
</feature>
<feature type="helix" evidence="7">
    <location>
        <begin position="14"/>
        <end position="25"/>
    </location>
</feature>
<feature type="strand" evidence="7">
    <location>
        <begin position="30"/>
        <end position="36"/>
    </location>
</feature>
<feature type="helix" evidence="7">
    <location>
        <begin position="40"/>
        <end position="45"/>
    </location>
</feature>
<feature type="helix" evidence="7">
    <location>
        <begin position="47"/>
        <end position="65"/>
    </location>
</feature>
<feature type="helix" evidence="7">
    <location>
        <begin position="66"/>
        <end position="69"/>
    </location>
</feature>
<feature type="helix" evidence="7">
    <location>
        <begin position="80"/>
        <end position="104"/>
    </location>
</feature>
<feature type="strand" evidence="7">
    <location>
        <begin position="108"/>
        <end position="112"/>
    </location>
</feature>
<feature type="strand" evidence="7">
    <location>
        <begin position="114"/>
        <end position="118"/>
    </location>
</feature>
<feature type="strand" evidence="7">
    <location>
        <begin position="121"/>
        <end position="124"/>
    </location>
</feature>
<feature type="strand" evidence="7">
    <location>
        <begin position="127"/>
        <end position="136"/>
    </location>
</feature>
<feature type="strand" evidence="7">
    <location>
        <begin position="140"/>
        <end position="142"/>
    </location>
</feature>
<feature type="helix" evidence="7">
    <location>
        <begin position="150"/>
        <end position="152"/>
    </location>
</feature>
<feature type="helix" evidence="7">
    <location>
        <begin position="156"/>
        <end position="161"/>
    </location>
</feature>
<feature type="strand" evidence="7">
    <location>
        <begin position="167"/>
        <end position="172"/>
    </location>
</feature>
<feature type="helix" evidence="7">
    <location>
        <begin position="176"/>
        <end position="187"/>
    </location>
</feature>
<feature type="strand" evidence="7">
    <location>
        <begin position="191"/>
        <end position="195"/>
    </location>
</feature>
<feature type="strand" evidence="7">
    <location>
        <begin position="197"/>
        <end position="202"/>
    </location>
</feature>
<feature type="helix" evidence="7">
    <location>
        <begin position="207"/>
        <end position="219"/>
    </location>
</feature>
<feature type="strand" evidence="7">
    <location>
        <begin position="223"/>
        <end position="227"/>
    </location>
</feature>
<feature type="strand" evidence="7">
    <location>
        <begin position="230"/>
        <end position="236"/>
    </location>
</feature>
<feature type="strand" evidence="7">
    <location>
        <begin position="239"/>
        <end position="244"/>
    </location>
</feature>
<feature type="strand" evidence="7">
    <location>
        <begin position="249"/>
        <end position="258"/>
    </location>
</feature>
<feature type="strand" evidence="7">
    <location>
        <begin position="262"/>
        <end position="265"/>
    </location>
</feature>
<feature type="helix" evidence="7">
    <location>
        <begin position="271"/>
        <end position="274"/>
    </location>
</feature>
<feature type="strand" evidence="7">
    <location>
        <begin position="297"/>
        <end position="299"/>
    </location>
</feature>
<feature type="helix" evidence="7">
    <location>
        <begin position="301"/>
        <end position="304"/>
    </location>
</feature>
<feature type="helix" evidence="7">
    <location>
        <begin position="310"/>
        <end position="325"/>
    </location>
</feature>
<feature type="strand" evidence="7">
    <location>
        <begin position="340"/>
        <end position="342"/>
    </location>
</feature>
<feature type="strand" evidence="7">
    <location>
        <begin position="348"/>
        <end position="352"/>
    </location>
</feature>
<feature type="helix" evidence="7">
    <location>
        <begin position="355"/>
        <end position="362"/>
    </location>
</feature>
<feature type="strand" evidence="7">
    <location>
        <begin position="366"/>
        <end position="373"/>
    </location>
</feature>
<feature type="helix" evidence="7">
    <location>
        <begin position="376"/>
        <end position="378"/>
    </location>
</feature>
<feature type="strand" evidence="7">
    <location>
        <begin position="381"/>
        <end position="383"/>
    </location>
</feature>
<feature type="strand" evidence="7">
    <location>
        <begin position="387"/>
        <end position="394"/>
    </location>
</feature>
<feature type="turn" evidence="7">
    <location>
        <begin position="395"/>
        <end position="398"/>
    </location>
</feature>
<feature type="strand" evidence="7">
    <location>
        <begin position="399"/>
        <end position="407"/>
    </location>
</feature>
<feature type="helix" evidence="7">
    <location>
        <begin position="410"/>
        <end position="412"/>
    </location>
</feature>
<feature type="helix" evidence="7">
    <location>
        <begin position="415"/>
        <end position="422"/>
    </location>
</feature>
<feature type="helix" evidence="7">
    <location>
        <begin position="427"/>
        <end position="431"/>
    </location>
</feature>
<feature type="strand" evidence="7">
    <location>
        <begin position="437"/>
        <end position="440"/>
    </location>
</feature>
<feature type="helix" evidence="7">
    <location>
        <begin position="441"/>
        <end position="445"/>
    </location>
</feature>
<accession>D0VWY5</accession>
<protein>
    <recommendedName>
        <fullName evidence="4">Glutathione amide reductase</fullName>
        <shortName evidence="4">GAR</shortName>
        <ecNumber evidence="4">1.8.1.16</ecNumber>
    </recommendedName>
</protein>
<proteinExistence type="evidence at protein level"/>
<reference evidence="5" key="1">
    <citation type="journal article" date="2001" name="J. Biol. Chem.">
        <title>Characterization of glutathione amide reductase from Chromatium gracile. Identification of a novel thiol peroxidase (Prx/Grx) fueled by glutathione amide redox cycling.</title>
        <authorList>
            <person name="Vergauwen B."/>
            <person name="Pauwels F."/>
            <person name="Jacquemotte F."/>
            <person name="Meyer T.E."/>
            <person name="Cusanovich M.A."/>
            <person name="Bartsch R.G."/>
            <person name="Van Beeumen J.J."/>
        </authorList>
    </citation>
    <scope>NUCLEOTIDE SEQUENCE [GENOMIC DNA]</scope>
    <scope>PROTEIN SEQUENCE OF 2-52</scope>
    <scope>CLEAVAGE OF INITIATOR METHIONINE</scope>
    <scope>FUNCTION</scope>
    <scope>CATALYTIC ACTIVITY</scope>
    <scope>COFACTOR</scope>
    <scope>BIOPHYSICOCHEMICAL PROPERTIES</scope>
    <scope>SUBUNIT</scope>
    <scope>MASS SPECTROMETRY</scope>
    <source>
        <strain evidence="2">DSM 1712 / HOL-1</strain>
    </source>
</reference>
<reference evidence="5" key="2">
    <citation type="journal article" date="2002" name="Acta Crystallogr. D">
        <title>Crystallization and preliminary X-ray crystallographic analysis of glutathione amide reductase from Chromatium gracile.</title>
        <authorList>
            <person name="Vergauwen B."/>
            <person name="Van Petegem F."/>
            <person name="Remaut H."/>
            <person name="Pauwels F."/>
            <person name="Van Beeumen J.J."/>
        </authorList>
    </citation>
    <scope>CRYSTALLIZATION</scope>
    <scope>PRELIMINARY X-RAY CRYSTALLOGRAPHY (2.10 ANGSTROMS)</scope>
</reference>
<reference evidence="5 6" key="3">
    <citation type="journal article" date="2007" name="J. Mol. Biol.">
        <title>Understanding nicotinamide dinucleotide cofactor and substrate specificity in class I flavoprotein disulfide oxidoreductases: crystallographic analysis of a glutathione amide reductase.</title>
        <authorList>
            <person name="Van Petegem F."/>
            <person name="De Vos D."/>
            <person name="Savvides S."/>
            <person name="Vergauwen B."/>
            <person name="Van Beeumen J."/>
        </authorList>
    </citation>
    <scope>X-RAY CRYSTALLOGRAPHY (2.10 ANGSTROMS) IN COMPLEX WITH FAD; NAD AND NICKEL</scope>
    <scope>SUBUNIT</scope>
</reference>
<name>GASHR_MARGR</name>
<comment type="function">
    <text evidence="2">Catalyzes the reduction of glutathione amide disulfide (GASSAG) to restore glutathione amide (GASH) in the presence of NADH. May play a role in GASH metabolism under anaerobic conditions as a sulfide carrier necessary for cytoplasmic sulfide oxidation.</text>
</comment>
<comment type="catalytic activity">
    <reaction evidence="2">
        <text>2 glutathione amide + NAD(+) = glutathione amide disulfide + NADH + H(+)</text>
        <dbReference type="Rhea" id="RHEA:27433"/>
        <dbReference type="ChEBI" id="CHEBI:15378"/>
        <dbReference type="ChEBI" id="CHEBI:57540"/>
        <dbReference type="ChEBI" id="CHEBI:57945"/>
        <dbReference type="ChEBI" id="CHEBI:59895"/>
        <dbReference type="ChEBI" id="CHEBI:59896"/>
        <dbReference type="EC" id="1.8.1.16"/>
    </reaction>
</comment>
<comment type="cofactor">
    <cofactor evidence="2 3">
        <name>FAD</name>
        <dbReference type="ChEBI" id="CHEBI:57692"/>
    </cofactor>
    <text evidence="2 3">Binds 1 FAD per subunit.</text>
</comment>
<comment type="biophysicochemical properties">
    <kinetics>
        <KM evidence="2">97 uM for glutathione amide disulfide (GASSAG) for the reverse reaction (in the presence of 100 uM NADH)</KM>
        <KM evidence="2">6.9 mM for glutathione disulfide (GSH) for the reverse reaction</KM>
        <KM evidence="2">13.2 uM for NADH for the reverse reaction (in the presence of 500 uM GASSAG)</KM>
        <KM evidence="2">1.98 mM for NADPH for the reverse reaction</KM>
    </kinetics>
</comment>
<comment type="subunit">
    <text evidence="2 3">Homodimer.</text>
</comment>
<comment type="mass spectrometry" mass="49030.0" method="Electrospray" evidence="2"/>
<comment type="miscellaneous">
    <text evidence="3">The active site is a redox-active disulfide bond.</text>
</comment>
<comment type="similarity">
    <text evidence="1">Belongs to the class-I pyridine nucleotide-disulfide oxidoreductase family.</text>
</comment>
<sequence length="463" mass="49159">MTQHFDLIAIGGGSGGLAVAEKAAAFGKRVALIESKALGGTCVNVGCVPKKVMWYASHLAEAVRDAPGFGVQASGGTLDWPRLVAGRDRYIGAINSFWDGYVERLGITRVDGHARFVDAHTIEVEGQRLSADHIVIATGGRPIVPRLPGAELGITSDGFFALQQQPKRVAIIGAGYIGIELAGLLRSFGSEVTVVALEDRLLFQFDPLLSATLAENMHAQGIETHLEFAVAALERDAQGTTLVAQDGTRLEGFDSVIWAVGRAPNTRDLGLEAAGIEVQSNGMVPTDAYQNTNVPGVYALGDITGRDQLTPVAIAAGRRLAERLFDGQSERKLDYDNIPTVVFAHPPLSKVGLSEPEARERLGDVLTVYETSFTPMRYALNEHGPKTAMKLVCAGPEQRVVGVHVIGDGADEMLQGFAVAVKMGATKADFDNTVAIHPGSAEELVTLKEPVRRPGDPLPEGAA</sequence>
<evidence type="ECO:0000255" key="1"/>
<evidence type="ECO:0000269" key="2">
    <source>
    </source>
</evidence>
<evidence type="ECO:0000269" key="3">
    <source>
    </source>
</evidence>
<evidence type="ECO:0000303" key="4">
    <source>
    </source>
</evidence>
<evidence type="ECO:0000305" key="5"/>
<evidence type="ECO:0000312" key="6">
    <source>
        <dbReference type="PDB" id="2RAB"/>
    </source>
</evidence>
<evidence type="ECO:0007829" key="7">
    <source>
        <dbReference type="PDB" id="2R9Z"/>
    </source>
</evidence>
<keyword id="KW-0002">3D-structure</keyword>
<keyword id="KW-0903">Direct protein sequencing</keyword>
<keyword id="KW-1015">Disulfide bond</keyword>
<keyword id="KW-0274">FAD</keyword>
<keyword id="KW-0285">Flavoprotein</keyword>
<keyword id="KW-0479">Metal-binding</keyword>
<keyword id="KW-0520">NAD</keyword>
<keyword id="KW-0533">Nickel</keyword>
<keyword id="KW-0547">Nucleotide-binding</keyword>
<keyword id="KW-0560">Oxidoreductase</keyword>
<keyword id="KW-0676">Redox-active center</keyword>
<dbReference type="EC" id="1.8.1.16" evidence="4"/>
<dbReference type="PDB" id="2R9Z">
    <property type="method" value="X-ray"/>
    <property type="resolution" value="2.10 A"/>
    <property type="chains" value="A/B=1-463"/>
</dbReference>
<dbReference type="PDB" id="2RAB">
    <property type="method" value="X-ray"/>
    <property type="resolution" value="2.50 A"/>
    <property type="chains" value="A/B=1-463"/>
</dbReference>
<dbReference type="PDBsum" id="2R9Z"/>
<dbReference type="PDBsum" id="2RAB"/>
<dbReference type="SMR" id="D0VWY5"/>
<dbReference type="SABIO-RK" id="D0VWY5"/>
<dbReference type="EvolutionaryTrace" id="D0VWY5"/>
<dbReference type="GO" id="GO:0005829">
    <property type="term" value="C:cytosol"/>
    <property type="evidence" value="ECO:0007669"/>
    <property type="project" value="TreeGrafter"/>
</dbReference>
<dbReference type="GO" id="GO:0050660">
    <property type="term" value="F:flavin adenine dinucleotide binding"/>
    <property type="evidence" value="ECO:0007669"/>
    <property type="project" value="InterPro"/>
</dbReference>
<dbReference type="GO" id="GO:0004362">
    <property type="term" value="F:glutathione-disulfide reductase (NADPH) activity"/>
    <property type="evidence" value="ECO:0007669"/>
    <property type="project" value="InterPro"/>
</dbReference>
<dbReference type="GO" id="GO:0046872">
    <property type="term" value="F:metal ion binding"/>
    <property type="evidence" value="ECO:0007669"/>
    <property type="project" value="UniProtKB-KW"/>
</dbReference>
<dbReference type="GO" id="GO:0050661">
    <property type="term" value="F:NADP binding"/>
    <property type="evidence" value="ECO:0007669"/>
    <property type="project" value="InterPro"/>
</dbReference>
<dbReference type="GO" id="GO:0045454">
    <property type="term" value="P:cell redox homeostasis"/>
    <property type="evidence" value="ECO:0007669"/>
    <property type="project" value="InterPro"/>
</dbReference>
<dbReference type="GO" id="GO:0034599">
    <property type="term" value="P:cellular response to oxidative stress"/>
    <property type="evidence" value="ECO:0007669"/>
    <property type="project" value="TreeGrafter"/>
</dbReference>
<dbReference type="GO" id="GO:0006749">
    <property type="term" value="P:glutathione metabolic process"/>
    <property type="evidence" value="ECO:0007669"/>
    <property type="project" value="InterPro"/>
</dbReference>
<dbReference type="FunFam" id="3.30.390.30:FF:000003">
    <property type="entry name" value="Glutathione reductase"/>
    <property type="match status" value="1"/>
</dbReference>
<dbReference type="FunFam" id="3.50.50.60:FF:000235">
    <property type="entry name" value="Glutathione reductase"/>
    <property type="match status" value="1"/>
</dbReference>
<dbReference type="Gene3D" id="3.30.390.30">
    <property type="match status" value="1"/>
</dbReference>
<dbReference type="Gene3D" id="3.50.50.60">
    <property type="entry name" value="FAD/NAD(P)-binding domain"/>
    <property type="match status" value="2"/>
</dbReference>
<dbReference type="InterPro" id="IPR036188">
    <property type="entry name" value="FAD/NAD-bd_sf"/>
</dbReference>
<dbReference type="InterPro" id="IPR023753">
    <property type="entry name" value="FAD/NAD-binding_dom"/>
</dbReference>
<dbReference type="InterPro" id="IPR016156">
    <property type="entry name" value="FAD/NAD-linked_Rdtase_dimer_sf"/>
</dbReference>
<dbReference type="InterPro" id="IPR006322">
    <property type="entry name" value="Glutathione_Rdtase_euk/bac"/>
</dbReference>
<dbReference type="InterPro" id="IPR046952">
    <property type="entry name" value="GSHR/TRXR-like"/>
</dbReference>
<dbReference type="InterPro" id="IPR001100">
    <property type="entry name" value="Pyr_nuc-diS_OxRdtase"/>
</dbReference>
<dbReference type="InterPro" id="IPR004099">
    <property type="entry name" value="Pyr_nucl-diS_OxRdtase_dimer"/>
</dbReference>
<dbReference type="InterPro" id="IPR012999">
    <property type="entry name" value="Pyr_OxRdtase_I_AS"/>
</dbReference>
<dbReference type="NCBIfam" id="TIGR01421">
    <property type="entry name" value="gluta_reduc_1"/>
    <property type="match status" value="1"/>
</dbReference>
<dbReference type="NCBIfam" id="NF004776">
    <property type="entry name" value="PRK06116.1"/>
    <property type="match status" value="1"/>
</dbReference>
<dbReference type="PANTHER" id="PTHR42737">
    <property type="entry name" value="GLUTATHIONE REDUCTASE"/>
    <property type="match status" value="1"/>
</dbReference>
<dbReference type="PANTHER" id="PTHR42737:SF2">
    <property type="entry name" value="GLUTATHIONE REDUCTASE"/>
    <property type="match status" value="1"/>
</dbReference>
<dbReference type="Pfam" id="PF07992">
    <property type="entry name" value="Pyr_redox_2"/>
    <property type="match status" value="1"/>
</dbReference>
<dbReference type="Pfam" id="PF02852">
    <property type="entry name" value="Pyr_redox_dim"/>
    <property type="match status" value="1"/>
</dbReference>
<dbReference type="PIRSF" id="PIRSF000350">
    <property type="entry name" value="Mercury_reductase_MerA"/>
    <property type="match status" value="1"/>
</dbReference>
<dbReference type="PRINTS" id="PR00368">
    <property type="entry name" value="FADPNR"/>
</dbReference>
<dbReference type="PRINTS" id="PR00411">
    <property type="entry name" value="PNDRDTASEI"/>
</dbReference>
<dbReference type="SUPFAM" id="SSF51905">
    <property type="entry name" value="FAD/NAD(P)-binding domain"/>
    <property type="match status" value="1"/>
</dbReference>
<dbReference type="SUPFAM" id="SSF55424">
    <property type="entry name" value="FAD/NAD-linked reductases, dimerisation (C-terminal) domain"/>
    <property type="match status" value="1"/>
</dbReference>
<dbReference type="PROSITE" id="PS00076">
    <property type="entry name" value="PYRIDINE_REDOX_1"/>
    <property type="match status" value="1"/>
</dbReference>
<gene>
    <name evidence="4" type="primary">garB</name>
</gene>
<organism>
    <name type="scientific">Marichromatium gracile</name>
    <name type="common">Chromatium gracile</name>
    <dbReference type="NCBI Taxonomy" id="1048"/>
    <lineage>
        <taxon>Bacteria</taxon>
        <taxon>Pseudomonadati</taxon>
        <taxon>Pseudomonadota</taxon>
        <taxon>Gammaproteobacteria</taxon>
        <taxon>Chromatiales</taxon>
        <taxon>Chromatiaceae</taxon>
        <taxon>Marichromatium</taxon>
    </lineage>
</organism>